<accession>Q21XR4</accession>
<comment type="catalytic activity">
    <reaction evidence="1">
        <text>2-(N(omega)-L-arginino)succinate = fumarate + L-arginine</text>
        <dbReference type="Rhea" id="RHEA:24020"/>
        <dbReference type="ChEBI" id="CHEBI:29806"/>
        <dbReference type="ChEBI" id="CHEBI:32682"/>
        <dbReference type="ChEBI" id="CHEBI:57472"/>
        <dbReference type="EC" id="4.3.2.1"/>
    </reaction>
</comment>
<comment type="pathway">
    <text evidence="1">Amino-acid biosynthesis; L-arginine biosynthesis; L-arginine from L-ornithine and carbamoyl phosphate: step 3/3.</text>
</comment>
<comment type="subcellular location">
    <subcellularLocation>
        <location evidence="1">Cytoplasm</location>
    </subcellularLocation>
</comment>
<comment type="similarity">
    <text evidence="1">Belongs to the lyase 1 family. Argininosuccinate lyase subfamily.</text>
</comment>
<reference key="1">
    <citation type="submission" date="2006-02" db="EMBL/GenBank/DDBJ databases">
        <title>Complete sequence of chromosome of Rhodoferax ferrireducens DSM 15236.</title>
        <authorList>
            <person name="Copeland A."/>
            <person name="Lucas S."/>
            <person name="Lapidus A."/>
            <person name="Barry K."/>
            <person name="Detter J.C."/>
            <person name="Glavina del Rio T."/>
            <person name="Hammon N."/>
            <person name="Israni S."/>
            <person name="Pitluck S."/>
            <person name="Brettin T."/>
            <person name="Bruce D."/>
            <person name="Han C."/>
            <person name="Tapia R."/>
            <person name="Gilna P."/>
            <person name="Kiss H."/>
            <person name="Schmutz J."/>
            <person name="Larimer F."/>
            <person name="Land M."/>
            <person name="Kyrpides N."/>
            <person name="Ivanova N."/>
            <person name="Richardson P."/>
        </authorList>
    </citation>
    <scope>NUCLEOTIDE SEQUENCE [LARGE SCALE GENOMIC DNA]</scope>
    <source>
        <strain>ATCC BAA-621 / DSM 15236 / T118</strain>
    </source>
</reference>
<dbReference type="EC" id="4.3.2.1" evidence="1"/>
<dbReference type="EMBL" id="CP000267">
    <property type="protein sequence ID" value="ABD69439.1"/>
    <property type="molecule type" value="Genomic_DNA"/>
</dbReference>
<dbReference type="RefSeq" id="WP_011464007.1">
    <property type="nucleotide sequence ID" value="NC_007908.1"/>
</dbReference>
<dbReference type="SMR" id="Q21XR4"/>
<dbReference type="STRING" id="338969.Rfer_1710"/>
<dbReference type="KEGG" id="rfr:Rfer_1710"/>
<dbReference type="eggNOG" id="COG0165">
    <property type="taxonomic scope" value="Bacteria"/>
</dbReference>
<dbReference type="HOGENOM" id="CLU_027272_2_3_4"/>
<dbReference type="OrthoDB" id="9769623at2"/>
<dbReference type="UniPathway" id="UPA00068">
    <property type="reaction ID" value="UER00114"/>
</dbReference>
<dbReference type="Proteomes" id="UP000008332">
    <property type="component" value="Chromosome"/>
</dbReference>
<dbReference type="GO" id="GO:0005829">
    <property type="term" value="C:cytosol"/>
    <property type="evidence" value="ECO:0007669"/>
    <property type="project" value="TreeGrafter"/>
</dbReference>
<dbReference type="GO" id="GO:0004056">
    <property type="term" value="F:argininosuccinate lyase activity"/>
    <property type="evidence" value="ECO:0007669"/>
    <property type="project" value="UniProtKB-UniRule"/>
</dbReference>
<dbReference type="GO" id="GO:0042450">
    <property type="term" value="P:arginine biosynthetic process via ornithine"/>
    <property type="evidence" value="ECO:0007669"/>
    <property type="project" value="InterPro"/>
</dbReference>
<dbReference type="GO" id="GO:0006526">
    <property type="term" value="P:L-arginine biosynthetic process"/>
    <property type="evidence" value="ECO:0007669"/>
    <property type="project" value="UniProtKB-UniRule"/>
</dbReference>
<dbReference type="CDD" id="cd01359">
    <property type="entry name" value="Argininosuccinate_lyase"/>
    <property type="match status" value="1"/>
</dbReference>
<dbReference type="FunFam" id="1.10.275.10:FF:000002">
    <property type="entry name" value="Argininosuccinate lyase"/>
    <property type="match status" value="1"/>
</dbReference>
<dbReference type="FunFam" id="1.10.40.30:FF:000001">
    <property type="entry name" value="Argininosuccinate lyase"/>
    <property type="match status" value="1"/>
</dbReference>
<dbReference type="FunFam" id="1.20.200.10:FF:000015">
    <property type="entry name" value="argininosuccinate lyase isoform X2"/>
    <property type="match status" value="1"/>
</dbReference>
<dbReference type="Gene3D" id="1.10.40.30">
    <property type="entry name" value="Fumarase/aspartase (C-terminal domain)"/>
    <property type="match status" value="1"/>
</dbReference>
<dbReference type="Gene3D" id="1.20.200.10">
    <property type="entry name" value="Fumarase/aspartase (Central domain)"/>
    <property type="match status" value="1"/>
</dbReference>
<dbReference type="Gene3D" id="1.10.275.10">
    <property type="entry name" value="Fumarase/aspartase (N-terminal domain)"/>
    <property type="match status" value="1"/>
</dbReference>
<dbReference type="HAMAP" id="MF_00006">
    <property type="entry name" value="Arg_succ_lyase"/>
    <property type="match status" value="1"/>
</dbReference>
<dbReference type="InterPro" id="IPR029419">
    <property type="entry name" value="Arg_succ_lyase_C"/>
</dbReference>
<dbReference type="InterPro" id="IPR009049">
    <property type="entry name" value="Argininosuccinate_lyase"/>
</dbReference>
<dbReference type="InterPro" id="IPR024083">
    <property type="entry name" value="Fumarase/histidase_N"/>
</dbReference>
<dbReference type="InterPro" id="IPR020557">
    <property type="entry name" value="Fumarate_lyase_CS"/>
</dbReference>
<dbReference type="InterPro" id="IPR000362">
    <property type="entry name" value="Fumarate_lyase_fam"/>
</dbReference>
<dbReference type="InterPro" id="IPR022761">
    <property type="entry name" value="Fumarate_lyase_N"/>
</dbReference>
<dbReference type="InterPro" id="IPR008948">
    <property type="entry name" value="L-Aspartase-like"/>
</dbReference>
<dbReference type="NCBIfam" id="TIGR00838">
    <property type="entry name" value="argH"/>
    <property type="match status" value="1"/>
</dbReference>
<dbReference type="PANTHER" id="PTHR43814">
    <property type="entry name" value="ARGININOSUCCINATE LYASE"/>
    <property type="match status" value="1"/>
</dbReference>
<dbReference type="PANTHER" id="PTHR43814:SF1">
    <property type="entry name" value="ARGININOSUCCINATE LYASE"/>
    <property type="match status" value="1"/>
</dbReference>
<dbReference type="Pfam" id="PF14698">
    <property type="entry name" value="ASL_C2"/>
    <property type="match status" value="1"/>
</dbReference>
<dbReference type="Pfam" id="PF00206">
    <property type="entry name" value="Lyase_1"/>
    <property type="match status" value="1"/>
</dbReference>
<dbReference type="PRINTS" id="PR00145">
    <property type="entry name" value="ARGSUCLYASE"/>
</dbReference>
<dbReference type="PRINTS" id="PR00149">
    <property type="entry name" value="FUMRATELYASE"/>
</dbReference>
<dbReference type="SUPFAM" id="SSF48557">
    <property type="entry name" value="L-aspartase-like"/>
    <property type="match status" value="1"/>
</dbReference>
<dbReference type="PROSITE" id="PS00163">
    <property type="entry name" value="FUMARATE_LYASES"/>
    <property type="match status" value="1"/>
</dbReference>
<sequence length="483" mass="53199">MSHNQFDKKSQAWSALFSEPMSDLVKRYTASVFFDKRLWQADIAGSLAHADMLAAQKIISSEDHNAIQSGMATISAEIESGAFDWKLELEDVHLNIEARLTQLIGLAGKRLHTGRSRNDQVATDVRLWLRGEIDLIGALLTDLQKALLEVAEKNVEVILPGFTHLQVAQPISFGHHMLAYVEMFSRDAERMSEVRRRTNRLPLGAAALAGTSYPLDRERVAVSLGMVDEKGHPCVCQNSLDAVSDRDFAIEFTAAASLCMVHISRMSEELILWMSQNFGFIKIADRFTTGSSIMPQKKNPDVPELARGKTGRVVGHLMGLITLMKGQPLAYNKDNQEDKEPLFDTVDTLKDTLRIFAEMIGGQLNPATGIKEGGISVNPQAMEQAALKGYATATDLADYLVKKGLPFRDAHETVAHAVKAAITHQVDLSELPLAVLQQFNPGIEKDVYEVLSLRGSLNARDILGGTAPNQVRAQIARHRARLG</sequence>
<organism>
    <name type="scientific">Albidiferax ferrireducens (strain ATCC BAA-621 / DSM 15236 / T118)</name>
    <name type="common">Rhodoferax ferrireducens</name>
    <dbReference type="NCBI Taxonomy" id="338969"/>
    <lineage>
        <taxon>Bacteria</taxon>
        <taxon>Pseudomonadati</taxon>
        <taxon>Pseudomonadota</taxon>
        <taxon>Betaproteobacteria</taxon>
        <taxon>Burkholderiales</taxon>
        <taxon>Comamonadaceae</taxon>
        <taxon>Rhodoferax</taxon>
    </lineage>
</organism>
<feature type="chain" id="PRO_0000240761" description="Argininosuccinate lyase">
    <location>
        <begin position="1"/>
        <end position="483"/>
    </location>
</feature>
<gene>
    <name evidence="1" type="primary">argH</name>
    <name type="ordered locus">Rfer_1710</name>
</gene>
<name>ARLY_ALBFT</name>
<proteinExistence type="inferred from homology"/>
<keyword id="KW-0028">Amino-acid biosynthesis</keyword>
<keyword id="KW-0055">Arginine biosynthesis</keyword>
<keyword id="KW-0963">Cytoplasm</keyword>
<keyword id="KW-0456">Lyase</keyword>
<keyword id="KW-1185">Reference proteome</keyword>
<protein>
    <recommendedName>
        <fullName evidence="1">Argininosuccinate lyase</fullName>
        <shortName evidence="1">ASAL</shortName>
        <ecNumber evidence="1">4.3.2.1</ecNumber>
    </recommendedName>
    <alternativeName>
        <fullName evidence="1">Arginosuccinase</fullName>
    </alternativeName>
</protein>
<evidence type="ECO:0000255" key="1">
    <source>
        <dbReference type="HAMAP-Rule" id="MF_00006"/>
    </source>
</evidence>